<reference key="1">
    <citation type="journal article" date="2002" name="Nature">
        <title>The genome sequence of Schizosaccharomyces pombe.</title>
        <authorList>
            <person name="Wood V."/>
            <person name="Gwilliam R."/>
            <person name="Rajandream M.A."/>
            <person name="Lyne M.H."/>
            <person name="Lyne R."/>
            <person name="Stewart A."/>
            <person name="Sgouros J.G."/>
            <person name="Peat N."/>
            <person name="Hayles J."/>
            <person name="Baker S.G."/>
            <person name="Basham D."/>
            <person name="Bowman S."/>
            <person name="Brooks K."/>
            <person name="Brown D."/>
            <person name="Brown S."/>
            <person name="Chillingworth T."/>
            <person name="Churcher C.M."/>
            <person name="Collins M."/>
            <person name="Connor R."/>
            <person name="Cronin A."/>
            <person name="Davis P."/>
            <person name="Feltwell T."/>
            <person name="Fraser A."/>
            <person name="Gentles S."/>
            <person name="Goble A."/>
            <person name="Hamlin N."/>
            <person name="Harris D.E."/>
            <person name="Hidalgo J."/>
            <person name="Hodgson G."/>
            <person name="Holroyd S."/>
            <person name="Hornsby T."/>
            <person name="Howarth S."/>
            <person name="Huckle E.J."/>
            <person name="Hunt S."/>
            <person name="Jagels K."/>
            <person name="James K.D."/>
            <person name="Jones L."/>
            <person name="Jones M."/>
            <person name="Leather S."/>
            <person name="McDonald S."/>
            <person name="McLean J."/>
            <person name="Mooney P."/>
            <person name="Moule S."/>
            <person name="Mungall K.L."/>
            <person name="Murphy L.D."/>
            <person name="Niblett D."/>
            <person name="Odell C."/>
            <person name="Oliver K."/>
            <person name="O'Neil S."/>
            <person name="Pearson D."/>
            <person name="Quail M.A."/>
            <person name="Rabbinowitsch E."/>
            <person name="Rutherford K.M."/>
            <person name="Rutter S."/>
            <person name="Saunders D."/>
            <person name="Seeger K."/>
            <person name="Sharp S."/>
            <person name="Skelton J."/>
            <person name="Simmonds M.N."/>
            <person name="Squares R."/>
            <person name="Squares S."/>
            <person name="Stevens K."/>
            <person name="Taylor K."/>
            <person name="Taylor R.G."/>
            <person name="Tivey A."/>
            <person name="Walsh S.V."/>
            <person name="Warren T."/>
            <person name="Whitehead S."/>
            <person name="Woodward J.R."/>
            <person name="Volckaert G."/>
            <person name="Aert R."/>
            <person name="Robben J."/>
            <person name="Grymonprez B."/>
            <person name="Weltjens I."/>
            <person name="Vanstreels E."/>
            <person name="Rieger M."/>
            <person name="Schaefer M."/>
            <person name="Mueller-Auer S."/>
            <person name="Gabel C."/>
            <person name="Fuchs M."/>
            <person name="Duesterhoeft A."/>
            <person name="Fritzc C."/>
            <person name="Holzer E."/>
            <person name="Moestl D."/>
            <person name="Hilbert H."/>
            <person name="Borzym K."/>
            <person name="Langer I."/>
            <person name="Beck A."/>
            <person name="Lehrach H."/>
            <person name="Reinhardt R."/>
            <person name="Pohl T.M."/>
            <person name="Eger P."/>
            <person name="Zimmermann W."/>
            <person name="Wedler H."/>
            <person name="Wambutt R."/>
            <person name="Purnelle B."/>
            <person name="Goffeau A."/>
            <person name="Cadieu E."/>
            <person name="Dreano S."/>
            <person name="Gloux S."/>
            <person name="Lelaure V."/>
            <person name="Mottier S."/>
            <person name="Galibert F."/>
            <person name="Aves S.J."/>
            <person name="Xiang Z."/>
            <person name="Hunt C."/>
            <person name="Moore K."/>
            <person name="Hurst S.M."/>
            <person name="Lucas M."/>
            <person name="Rochet M."/>
            <person name="Gaillardin C."/>
            <person name="Tallada V.A."/>
            <person name="Garzon A."/>
            <person name="Thode G."/>
            <person name="Daga R.R."/>
            <person name="Cruzado L."/>
            <person name="Jimenez J."/>
            <person name="Sanchez M."/>
            <person name="del Rey F."/>
            <person name="Benito J."/>
            <person name="Dominguez A."/>
            <person name="Revuelta J.L."/>
            <person name="Moreno S."/>
            <person name="Armstrong J."/>
            <person name="Forsburg S.L."/>
            <person name="Cerutti L."/>
            <person name="Lowe T."/>
            <person name="McCombie W.R."/>
            <person name="Paulsen I."/>
            <person name="Potashkin J."/>
            <person name="Shpakovski G.V."/>
            <person name="Ussery D."/>
            <person name="Barrell B.G."/>
            <person name="Nurse P."/>
        </authorList>
    </citation>
    <scope>NUCLEOTIDE SEQUENCE [LARGE SCALE GENOMIC DNA]</scope>
    <source>
        <strain>972 / ATCC 24843</strain>
    </source>
</reference>
<reference key="2">
    <citation type="journal article" date="2005" name="Eukaryot. Cell">
        <title>Systematic deletion analysis of fission yeast protein kinases.</title>
        <authorList>
            <person name="Bimbo A."/>
            <person name="Jia Y."/>
            <person name="Poh S.L."/>
            <person name="Karuturi R.K.M."/>
            <person name="den Elzen N."/>
            <person name="Peng X."/>
            <person name="Zheng L."/>
            <person name="O'Connell M."/>
            <person name="Liu E.T."/>
            <person name="Balasubramanian M.K."/>
            <person name="Liu J."/>
        </authorList>
    </citation>
    <scope>IDENTIFICATION</scope>
</reference>
<reference key="3">
    <citation type="journal article" date="2006" name="Nat. Biotechnol.">
        <title>ORFeome cloning and global analysis of protein localization in the fission yeast Schizosaccharomyces pombe.</title>
        <authorList>
            <person name="Matsuyama A."/>
            <person name="Arai R."/>
            <person name="Yashiroda Y."/>
            <person name="Shirai A."/>
            <person name="Kamata A."/>
            <person name="Sekido S."/>
            <person name="Kobayashi Y."/>
            <person name="Hashimoto A."/>
            <person name="Hamamoto M."/>
            <person name="Hiraoka Y."/>
            <person name="Horinouchi S."/>
            <person name="Yoshida M."/>
        </authorList>
    </citation>
    <scope>SUBCELLULAR LOCATION [LARGE SCALE ANALYSIS]</scope>
</reference>
<dbReference type="EC" id="2.7.11.1"/>
<dbReference type="EMBL" id="CU329672">
    <property type="protein sequence ID" value="CAB52885.2"/>
    <property type="molecule type" value="Genomic_DNA"/>
</dbReference>
<dbReference type="PIR" id="T41226">
    <property type="entry name" value="T41226"/>
</dbReference>
<dbReference type="PIR" id="T41638">
    <property type="entry name" value="T41638"/>
</dbReference>
<dbReference type="RefSeq" id="NP_588482.2">
    <property type="nucleotide sequence ID" value="NM_001023473.3"/>
</dbReference>
<dbReference type="SMR" id="Q9UU87"/>
<dbReference type="BioGRID" id="280222">
    <property type="interactions" value="1"/>
</dbReference>
<dbReference type="FunCoup" id="Q9UU87">
    <property type="interactions" value="122"/>
</dbReference>
<dbReference type="STRING" id="284812.Q9UU87"/>
<dbReference type="PaxDb" id="4896-SPCC1919.01.1"/>
<dbReference type="EnsemblFungi" id="SPCC1919.01.1">
    <property type="protein sequence ID" value="SPCC1919.01.1:pep"/>
    <property type="gene ID" value="SPCC1919.01"/>
</dbReference>
<dbReference type="GeneID" id="3361146"/>
<dbReference type="KEGG" id="spo:3361146"/>
<dbReference type="PomBase" id="SPCC1919.01"/>
<dbReference type="VEuPathDB" id="FungiDB:SPCC1919.01"/>
<dbReference type="eggNOG" id="KOG0583">
    <property type="taxonomic scope" value="Eukaryota"/>
</dbReference>
<dbReference type="HOGENOM" id="CLU_000288_63_0_1"/>
<dbReference type="InParanoid" id="Q9UU87"/>
<dbReference type="OMA" id="GLHEMIL"/>
<dbReference type="PhylomeDB" id="Q9UU87"/>
<dbReference type="Reactome" id="R-SPO-111932">
    <property type="pathway name" value="CaMK IV-mediated phosphorylation of CREB"/>
</dbReference>
<dbReference type="Reactome" id="R-SPO-442729">
    <property type="pathway name" value="CREB1 phosphorylation through the activation of CaMKII/CaMKK/CaMKIV cascasde"/>
</dbReference>
<dbReference type="Reactome" id="R-SPO-9619229">
    <property type="pathway name" value="Activation of RAC1 downstream of NMDARs"/>
</dbReference>
<dbReference type="PRO" id="PR:Q9UU87"/>
<dbReference type="Proteomes" id="UP000002485">
    <property type="component" value="Chromosome III"/>
</dbReference>
<dbReference type="GO" id="GO:0005829">
    <property type="term" value="C:cytosol"/>
    <property type="evidence" value="ECO:0007005"/>
    <property type="project" value="PomBase"/>
</dbReference>
<dbReference type="GO" id="GO:0005634">
    <property type="term" value="C:nucleus"/>
    <property type="evidence" value="ECO:0007005"/>
    <property type="project" value="PomBase"/>
</dbReference>
<dbReference type="GO" id="GO:0005524">
    <property type="term" value="F:ATP binding"/>
    <property type="evidence" value="ECO:0007669"/>
    <property type="project" value="UniProtKB-KW"/>
</dbReference>
<dbReference type="GO" id="GO:0106310">
    <property type="term" value="F:protein serine kinase activity"/>
    <property type="evidence" value="ECO:0007669"/>
    <property type="project" value="RHEA"/>
</dbReference>
<dbReference type="GO" id="GO:0004674">
    <property type="term" value="F:protein serine/threonine kinase activity"/>
    <property type="evidence" value="ECO:0000316"/>
    <property type="project" value="PomBase"/>
</dbReference>
<dbReference type="GO" id="GO:0071277">
    <property type="term" value="P:cellular response to calcium ion"/>
    <property type="evidence" value="ECO:0000315"/>
    <property type="project" value="PomBase"/>
</dbReference>
<dbReference type="GO" id="GO:0106057">
    <property type="term" value="P:negative regulation of calcineurin-mediated signaling"/>
    <property type="evidence" value="ECO:0000316"/>
    <property type="project" value="PomBase"/>
</dbReference>
<dbReference type="GO" id="GO:1904262">
    <property type="term" value="P:negative regulation of TORC1 signaling"/>
    <property type="evidence" value="ECO:0000315"/>
    <property type="project" value="PomBase"/>
</dbReference>
<dbReference type="GO" id="GO:0007165">
    <property type="term" value="P:signal transduction"/>
    <property type="evidence" value="ECO:0000318"/>
    <property type="project" value="GO_Central"/>
</dbReference>
<dbReference type="CDD" id="cd14008">
    <property type="entry name" value="STKc_LKB1_CaMKK"/>
    <property type="match status" value="1"/>
</dbReference>
<dbReference type="FunFam" id="1.10.510.10:FF:002476">
    <property type="entry name" value="Serine/threonine-protein kinase ppk34"/>
    <property type="match status" value="1"/>
</dbReference>
<dbReference type="Gene3D" id="1.10.510.10">
    <property type="entry name" value="Transferase(Phosphotransferase) domain 1"/>
    <property type="match status" value="1"/>
</dbReference>
<dbReference type="InterPro" id="IPR011009">
    <property type="entry name" value="Kinase-like_dom_sf"/>
</dbReference>
<dbReference type="InterPro" id="IPR000719">
    <property type="entry name" value="Prot_kinase_dom"/>
</dbReference>
<dbReference type="InterPro" id="IPR008271">
    <property type="entry name" value="Ser/Thr_kinase_AS"/>
</dbReference>
<dbReference type="PANTHER" id="PTHR43895">
    <property type="entry name" value="CALCIUM/CALMODULIN-DEPENDENT PROTEIN KINASE KINASE-RELATED"/>
    <property type="match status" value="1"/>
</dbReference>
<dbReference type="PANTHER" id="PTHR43895:SF150">
    <property type="entry name" value="SERINE_THREONINE-PROTEIN KINASE STK11"/>
    <property type="match status" value="1"/>
</dbReference>
<dbReference type="Pfam" id="PF00069">
    <property type="entry name" value="Pkinase"/>
    <property type="match status" value="1"/>
</dbReference>
<dbReference type="SMART" id="SM00220">
    <property type="entry name" value="S_TKc"/>
    <property type="match status" value="1"/>
</dbReference>
<dbReference type="SUPFAM" id="SSF56112">
    <property type="entry name" value="Protein kinase-like (PK-like)"/>
    <property type="match status" value="1"/>
</dbReference>
<dbReference type="PROSITE" id="PS50011">
    <property type="entry name" value="PROTEIN_KINASE_DOM"/>
    <property type="match status" value="1"/>
</dbReference>
<dbReference type="PROSITE" id="PS00108">
    <property type="entry name" value="PROTEIN_KINASE_ST"/>
    <property type="match status" value="1"/>
</dbReference>
<evidence type="ECO:0000255" key="1">
    <source>
        <dbReference type="PROSITE-ProRule" id="PRU00159"/>
    </source>
</evidence>
<evidence type="ECO:0000255" key="2">
    <source>
        <dbReference type="PROSITE-ProRule" id="PRU10027"/>
    </source>
</evidence>
<evidence type="ECO:0000269" key="3">
    <source>
    </source>
</evidence>
<comment type="catalytic activity">
    <reaction>
        <text>L-seryl-[protein] + ATP = O-phospho-L-seryl-[protein] + ADP + H(+)</text>
        <dbReference type="Rhea" id="RHEA:17989"/>
        <dbReference type="Rhea" id="RHEA-COMP:9863"/>
        <dbReference type="Rhea" id="RHEA-COMP:11604"/>
        <dbReference type="ChEBI" id="CHEBI:15378"/>
        <dbReference type="ChEBI" id="CHEBI:29999"/>
        <dbReference type="ChEBI" id="CHEBI:30616"/>
        <dbReference type="ChEBI" id="CHEBI:83421"/>
        <dbReference type="ChEBI" id="CHEBI:456216"/>
        <dbReference type="EC" id="2.7.11.1"/>
    </reaction>
</comment>
<comment type="catalytic activity">
    <reaction>
        <text>L-threonyl-[protein] + ATP = O-phospho-L-threonyl-[protein] + ADP + H(+)</text>
        <dbReference type="Rhea" id="RHEA:46608"/>
        <dbReference type="Rhea" id="RHEA-COMP:11060"/>
        <dbReference type="Rhea" id="RHEA-COMP:11605"/>
        <dbReference type="ChEBI" id="CHEBI:15378"/>
        <dbReference type="ChEBI" id="CHEBI:30013"/>
        <dbReference type="ChEBI" id="CHEBI:30616"/>
        <dbReference type="ChEBI" id="CHEBI:61977"/>
        <dbReference type="ChEBI" id="CHEBI:456216"/>
        <dbReference type="EC" id="2.7.11.1"/>
    </reaction>
</comment>
<comment type="subcellular location">
    <subcellularLocation>
        <location evidence="3">Cytoplasm</location>
    </subcellularLocation>
    <subcellularLocation>
        <location evidence="3">Nucleus</location>
    </subcellularLocation>
</comment>
<comment type="similarity">
    <text evidence="1">Belongs to the protein kinase superfamily. Ser/Thr protein kinase family.</text>
</comment>
<keyword id="KW-0067">ATP-binding</keyword>
<keyword id="KW-0963">Cytoplasm</keyword>
<keyword id="KW-0418">Kinase</keyword>
<keyword id="KW-0547">Nucleotide-binding</keyword>
<keyword id="KW-0539">Nucleus</keyword>
<keyword id="KW-1185">Reference proteome</keyword>
<keyword id="KW-0723">Serine/threonine-protein kinase</keyword>
<keyword id="KW-0808">Transferase</keyword>
<protein>
    <recommendedName>
        <fullName>Serine/threonine-protein kinase ppk34</fullName>
        <ecNumber>2.7.11.1</ecNumber>
    </recommendedName>
</protein>
<accession>Q9UU87</accession>
<accession>O94471</accession>
<name>PPK34_SCHPO</name>
<sequence>MSLPLPSFLSSNNYNSSETSLLTEGPESDEEDEGPLLKQYRLKNMLGYGACSTVYLAVDVSTNIEYAIKEFKKTSLRRREKFRLMQLEKELGSFNDMDSSTIEDQIRNQEKKDPYYYIRKELDVLKVLDHENVVKLYQVINSDYKDSLCMVLNYCPGGKLASVDHGISFDPMPLETCRKSFRQLVLAVNYIHGKGVIHRDIKPDNILFKENNNLCVIDFGLAEFLPKDGFVKPASGTPAFMAPELFDNELKKIKGKPLDIWSMGVTLYVIAFAEFPFNGSTILDMINVIKGKSLMIPAYCNSDLRKLLERCLEKNPEKRITIEELLRDPFLTERGKHHLTSSSIVTAFSSIWEI</sequence>
<proteinExistence type="inferred from homology"/>
<feature type="chain" id="PRO_0000086075" description="Serine/threonine-protein kinase ppk34">
    <location>
        <begin position="1"/>
        <end position="354"/>
    </location>
</feature>
<feature type="domain" description="Protein kinase" evidence="1">
    <location>
        <begin position="40"/>
        <end position="331"/>
    </location>
</feature>
<feature type="active site" description="Proton acceptor" evidence="1 2">
    <location>
        <position position="200"/>
    </location>
</feature>
<feature type="binding site" evidence="1">
    <location>
        <begin position="46"/>
        <end position="54"/>
    </location>
    <ligand>
        <name>ATP</name>
        <dbReference type="ChEBI" id="CHEBI:30616"/>
    </ligand>
</feature>
<feature type="binding site" evidence="1">
    <location>
        <position position="69"/>
    </location>
    <ligand>
        <name>ATP</name>
        <dbReference type="ChEBI" id="CHEBI:30616"/>
    </ligand>
</feature>
<organism>
    <name type="scientific">Schizosaccharomyces pombe (strain 972 / ATCC 24843)</name>
    <name type="common">Fission yeast</name>
    <dbReference type="NCBI Taxonomy" id="284812"/>
    <lineage>
        <taxon>Eukaryota</taxon>
        <taxon>Fungi</taxon>
        <taxon>Dikarya</taxon>
        <taxon>Ascomycota</taxon>
        <taxon>Taphrinomycotina</taxon>
        <taxon>Schizosaccharomycetes</taxon>
        <taxon>Schizosaccharomycetales</taxon>
        <taxon>Schizosaccharomycetaceae</taxon>
        <taxon>Schizosaccharomyces</taxon>
    </lineage>
</organism>
<gene>
    <name type="primary">ppk34</name>
    <name type="ORF">SPCC1919.01</name>
    <name type="ORF">SPCC830.12</name>
</gene>